<sequence length="445" mass="47107">MHSQIWVVSTLLISIVLIVLTIVKFKFHPFLALLLASFFVGTMMGMGPLDMVNAIESGIGGTLGFLAAVIGLGTILGKMMEVSGAAERIGLTLQRCRWLSADVIMVLVGLICGITLFVEVGVVLLIPLAFSIAKKTNTSLLKLAIPLCTALMAVHCVVPPHPAALYVANKLGADIGSVIVYGLLVGLMASLIGGPLFLKFLGQRLPFKPVPTEFADLKVRDEKTLPSLGATLFTVLLPIALMLVKTIAELNMARESGLYTLLEFIGNPITATFIAVFVAYYVLGIRQHMSMGTMLTHTENGFGSIANILLIIGAGGAFNAILKSSSLADTLAVILSNMHMHPILLAWLVALILHAAVGSATVAMMGATAIVAPMLPLYPDISPEIIAIAIGSGAIGCTIVTDSLFWLVKQYCGATLNETFKYYTTATFIASVIALAGTFLLSFII</sequence>
<reference key="1">
    <citation type="journal article" date="2002" name="Proc. Natl. Acad. Sci. U.S.A.">
        <title>Extensive mosaic structure revealed by the complete genome sequence of uropathogenic Escherichia coli.</title>
        <authorList>
            <person name="Welch R.A."/>
            <person name="Burland V."/>
            <person name="Plunkett G. III"/>
            <person name="Redford P."/>
            <person name="Roesch P."/>
            <person name="Rasko D."/>
            <person name="Buckles E.L."/>
            <person name="Liou S.-R."/>
            <person name="Boutin A."/>
            <person name="Hackett J."/>
            <person name="Stroud D."/>
            <person name="Mayhew G.F."/>
            <person name="Rose D.J."/>
            <person name="Zhou S."/>
            <person name="Schwartz D.C."/>
            <person name="Perna N.T."/>
            <person name="Mobley H.L.T."/>
            <person name="Donnenberg M.S."/>
            <person name="Blattner F.R."/>
        </authorList>
    </citation>
    <scope>NUCLEOTIDE SEQUENCE [LARGE SCALE GENOMIC DNA]</scope>
    <source>
        <strain>CFT073 / ATCC 700928 / UPEC</strain>
    </source>
</reference>
<reference key="2">
    <citation type="journal article" date="2006" name="J. Bacteriol.">
        <title>DsdX is the second D-serine transporter in uropathogenic Escherichia coli clinical isolate CFT073.</title>
        <authorList>
            <person name="Anfora A.T."/>
            <person name="Welch R.A."/>
        </authorList>
    </citation>
    <scope>FUNCTION</scope>
    <scope>ACTIVITY REGULATION</scope>
    <scope>BIOPHYSICOCHEMICAL PROPERTIES</scope>
    <scope>DISRUPTION PHENOTYPE</scope>
    <source>
        <strain>CFT073 / ATCC 700928 / UPEC</strain>
    </source>
</reference>
<name>DSDX_ECOL6</name>
<dbReference type="EMBL" id="AE014075">
    <property type="protein sequence ID" value="AAN81350.1"/>
    <property type="molecule type" value="Genomic_DNA"/>
</dbReference>
<dbReference type="RefSeq" id="WP_000556042.1">
    <property type="nucleotide sequence ID" value="NZ_CP051263.1"/>
</dbReference>
<dbReference type="SMR" id="A0A0H2VAP9"/>
<dbReference type="STRING" id="199310.c2900"/>
<dbReference type="KEGG" id="ecc:c2900"/>
<dbReference type="eggNOG" id="COG2610">
    <property type="taxonomic scope" value="Bacteria"/>
</dbReference>
<dbReference type="HOGENOM" id="CLU_027949_0_0_6"/>
<dbReference type="Proteomes" id="UP000001410">
    <property type="component" value="Chromosome"/>
</dbReference>
<dbReference type="GO" id="GO:0005886">
    <property type="term" value="C:plasma membrane"/>
    <property type="evidence" value="ECO:0007669"/>
    <property type="project" value="UniProtKB-SubCell"/>
</dbReference>
<dbReference type="GO" id="GO:0042945">
    <property type="term" value="F:D-serine transmembrane transporter activity"/>
    <property type="evidence" value="ECO:0000314"/>
    <property type="project" value="UniProtKB"/>
</dbReference>
<dbReference type="GO" id="GO:0015128">
    <property type="term" value="F:gluconate transmembrane transporter activity"/>
    <property type="evidence" value="ECO:0007669"/>
    <property type="project" value="InterPro"/>
</dbReference>
<dbReference type="GO" id="GO:0042942">
    <property type="term" value="P:D-serine transmembrane transport"/>
    <property type="evidence" value="ECO:0000314"/>
    <property type="project" value="UniProtKB"/>
</dbReference>
<dbReference type="InterPro" id="IPR003474">
    <property type="entry name" value="Glcn_transporter"/>
</dbReference>
<dbReference type="NCBIfam" id="TIGR00791">
    <property type="entry name" value="gntP"/>
    <property type="match status" value="1"/>
</dbReference>
<dbReference type="NCBIfam" id="NF007395">
    <property type="entry name" value="PRK09921.1"/>
    <property type="match status" value="1"/>
</dbReference>
<dbReference type="PANTHER" id="PTHR30354:SF6">
    <property type="entry name" value="D-SERINE TRANSPORTER DSDX"/>
    <property type="match status" value="1"/>
</dbReference>
<dbReference type="PANTHER" id="PTHR30354">
    <property type="entry name" value="GNT FAMILY GLUCONATE TRANSPORTER"/>
    <property type="match status" value="1"/>
</dbReference>
<dbReference type="Pfam" id="PF02447">
    <property type="entry name" value="GntP_permease"/>
    <property type="match status" value="1"/>
</dbReference>
<dbReference type="PIRSF" id="PIRSF002746">
    <property type="entry name" value="Gluconate_transporter"/>
    <property type="match status" value="1"/>
</dbReference>
<feature type="chain" id="PRO_0000439179" description="D-serine transporter DsdX">
    <location>
        <begin position="1"/>
        <end position="445"/>
    </location>
</feature>
<feature type="transmembrane region" description="Helical" evidence="2">
    <location>
        <begin position="5"/>
        <end position="25"/>
    </location>
</feature>
<feature type="transmembrane region" description="Helical" evidence="2">
    <location>
        <begin position="29"/>
        <end position="49"/>
    </location>
</feature>
<feature type="transmembrane region" description="Helical" evidence="2">
    <location>
        <begin position="57"/>
        <end position="77"/>
    </location>
</feature>
<feature type="transmembrane region" description="Helical" evidence="2">
    <location>
        <begin position="106"/>
        <end position="126"/>
    </location>
</feature>
<feature type="transmembrane region" description="Helical" evidence="2">
    <location>
        <begin position="140"/>
        <end position="160"/>
    </location>
</feature>
<feature type="transmembrane region" description="Helical" evidence="2">
    <location>
        <begin position="178"/>
        <end position="198"/>
    </location>
</feature>
<feature type="transmembrane region" description="Helical" evidence="2">
    <location>
        <begin position="224"/>
        <end position="244"/>
    </location>
</feature>
<feature type="transmembrane region" description="Helical" evidence="2">
    <location>
        <begin position="265"/>
        <end position="285"/>
    </location>
</feature>
<feature type="transmembrane region" description="Helical" evidence="2">
    <location>
        <begin position="302"/>
        <end position="322"/>
    </location>
</feature>
<feature type="transmembrane region" description="Helical" evidence="2">
    <location>
        <begin position="343"/>
        <end position="363"/>
    </location>
</feature>
<feature type="transmembrane region" description="Helical" evidence="2">
    <location>
        <begin position="385"/>
        <end position="405"/>
    </location>
</feature>
<feature type="transmembrane region" description="Helical" evidence="2">
    <location>
        <begin position="425"/>
        <end position="445"/>
    </location>
</feature>
<gene>
    <name type="primary">dsdX</name>
    <name type="ordered locus">c2900</name>
</gene>
<proteinExistence type="evidence at protein level"/>
<evidence type="ECO:0000250" key="1">
    <source>
        <dbReference type="UniProtKB" id="P08555"/>
    </source>
</evidence>
<evidence type="ECO:0000255" key="2"/>
<evidence type="ECO:0000269" key="3">
    <source>
    </source>
</evidence>
<evidence type="ECO:0000303" key="4">
    <source>
    </source>
</evidence>
<evidence type="ECO:0000305" key="5"/>
<evidence type="ECO:0000305" key="6">
    <source>
    </source>
</evidence>
<comment type="function">
    <text evidence="3">Protein that allows transport of D-serine across the inner membrane, does not transport D-alanine nor probably glycine. Is probably a H(+) symporter, as CCCP inhibits transport. Transports D-serine more efficiently than CycA.</text>
</comment>
<comment type="activity regulation">
    <text evidence="3">Uptake of D-serine is inhibited by carbonyl cyanide m-chlorophenylhydrazone (CCCP), and at high concentrations of D-threonine, stimulated by D-cycloserine and not affected by D-alanine or glycine.</text>
</comment>
<comment type="biophysicochemical properties">
    <kinetics>
        <KM evidence="3">58.75 uM for D-serine</KM>
        <Vmax evidence="3">75.96 nmol/min/mg enzyme</Vmax>
    </kinetics>
</comment>
<comment type="subcellular location">
    <subcellularLocation>
        <location evidence="1">Cell inner membrane</location>
        <topology>Multi-pass membrane protein</topology>
    </subcellularLocation>
</comment>
<comment type="disruption phenotype">
    <text evidence="3">Single deletion, grows on D-serine, D-serine plus glycerol and D-alanine. A double dsdX-cycA deletion grows in D-serine plus glycerol, but not D-serine or D-alanine alone, growth on D-serine (but not D-alanine) is restored by dsdX, while growth on both D-alanine and D-serine is restored by cycA. Double dsdX-cycA deletion cannot take up D-serine.</text>
</comment>
<comment type="miscellaneous">
    <text evidence="6">E.coli CFT073, a uropathogenic strain (UPEC), was originally isolated from urine, which has a high concentration of D-serine. D-serine is toxic to bacteria. The abililty to take up D-serine coupled with the activity of D-serine dehydratase (dsdA) may allow use of this amino acid as a carbon source in a sugar-poor environment.</text>
</comment>
<comment type="similarity">
    <text evidence="5">Belongs to the GntP permease family.</text>
</comment>
<protein>
    <recommendedName>
        <fullName evidence="4">D-serine transporter DsdX</fullName>
    </recommendedName>
    <alternativeName>
        <fullName evidence="4">D-serine-specific permease</fullName>
    </alternativeName>
</protein>
<organism>
    <name type="scientific">Escherichia coli O6:H1 (strain CFT073 / ATCC 700928 / UPEC)</name>
    <dbReference type="NCBI Taxonomy" id="199310"/>
    <lineage>
        <taxon>Bacteria</taxon>
        <taxon>Pseudomonadati</taxon>
        <taxon>Pseudomonadota</taxon>
        <taxon>Gammaproteobacteria</taxon>
        <taxon>Enterobacterales</taxon>
        <taxon>Enterobacteriaceae</taxon>
        <taxon>Escherichia</taxon>
    </lineage>
</organism>
<keyword id="KW-0029">Amino-acid transport</keyword>
<keyword id="KW-0997">Cell inner membrane</keyword>
<keyword id="KW-1003">Cell membrane</keyword>
<keyword id="KW-0472">Membrane</keyword>
<keyword id="KW-1185">Reference proteome</keyword>
<keyword id="KW-0812">Transmembrane</keyword>
<keyword id="KW-1133">Transmembrane helix</keyword>
<keyword id="KW-0813">Transport</keyword>
<accession>A0A0H2VAP9</accession>